<comment type="function">
    <text evidence="1">Protein kinase with a significantly reduced C(a2+)/CAM affinity and dependence compared to other members of the CaMK family. May play a role in the down-regulation of CRE-dependent gene activation probably by phosphorylation of the CREB coactivator CRTC2/TORC2 and the resulting retention of TORC2 in the cytoplasm (By similarity).</text>
</comment>
<comment type="catalytic activity">
    <reaction>
        <text>L-seryl-[protein] + ATP = O-phospho-L-seryl-[protein] + ADP + H(+)</text>
        <dbReference type="Rhea" id="RHEA:17989"/>
        <dbReference type="Rhea" id="RHEA-COMP:9863"/>
        <dbReference type="Rhea" id="RHEA-COMP:11604"/>
        <dbReference type="ChEBI" id="CHEBI:15378"/>
        <dbReference type="ChEBI" id="CHEBI:29999"/>
        <dbReference type="ChEBI" id="CHEBI:30616"/>
        <dbReference type="ChEBI" id="CHEBI:83421"/>
        <dbReference type="ChEBI" id="CHEBI:456216"/>
        <dbReference type="EC" id="2.7.11.1"/>
    </reaction>
</comment>
<comment type="catalytic activity">
    <reaction>
        <text>L-threonyl-[protein] + ATP = O-phospho-L-threonyl-[protein] + ADP + H(+)</text>
        <dbReference type="Rhea" id="RHEA:46608"/>
        <dbReference type="Rhea" id="RHEA-COMP:11060"/>
        <dbReference type="Rhea" id="RHEA-COMP:11605"/>
        <dbReference type="ChEBI" id="CHEBI:15378"/>
        <dbReference type="ChEBI" id="CHEBI:30013"/>
        <dbReference type="ChEBI" id="CHEBI:30616"/>
        <dbReference type="ChEBI" id="CHEBI:61977"/>
        <dbReference type="ChEBI" id="CHEBI:456216"/>
        <dbReference type="EC" id="2.7.11.1"/>
    </reaction>
</comment>
<comment type="subunit">
    <text evidence="1">Binds to and stabilizes microtubules. Interacts with MAPK8IP1/JIP-1, MAPK8IP2/JIP-2, MAPK9/JNK2, PPP1R9B/NEURABIN-2 and actin.</text>
</comment>
<comment type="interaction">
    <interactant intactId="EBI-2930406">
        <id>Q8N568</id>
    </interactant>
    <interactant intactId="EBI-2510129">
        <id>Q96M94</id>
        <label>KLHL15</label>
    </interactant>
    <organismsDiffer>false</organismsDiffer>
    <experiments>3</experiments>
</comment>
<comment type="interaction">
    <interactant intactId="EBI-2930406">
        <id>Q8N568</id>
    </interactant>
    <interactant intactId="EBI-356498">
        <id>P62258</id>
        <label>YWHAE</label>
    </interactant>
    <organismsDiffer>false</organismsDiffer>
    <experiments>3</experiments>
</comment>
<comment type="subcellular location">
    <subcellularLocation>
        <location>Cytoplasm</location>
        <location>Cytoskeleton</location>
    </subcellularLocation>
    <text evidence="1">Colocalizes with microtubules.</text>
</comment>
<comment type="alternative products">
    <event type="alternative splicing"/>
    <isoform>
        <id>Q8N568-1</id>
        <name>1</name>
        <sequence type="displayed"/>
    </isoform>
    <isoform>
        <id>Q8N568-2</id>
        <name>2</name>
        <sequence type="described" ref="VSP_012794"/>
    </isoform>
    <isoform>
        <id>Q8N568-3</id>
        <name>3</name>
        <sequence type="described" ref="VSP_012793"/>
    </isoform>
</comment>
<comment type="tissue specificity">
    <text evidence="8">Expressed in the brain, heart and eyes.</text>
</comment>
<comment type="developmental stage">
    <text evidence="8">Expressed in fetal brain, and, to a lower extent, in fetal kidney.</text>
</comment>
<comment type="domain">
    <text evidence="1">The doublecortin domains are involved in the colocalization with microtubules.</text>
</comment>
<comment type="PTM">
    <text evidence="1">Autophosphorylated.</text>
</comment>
<comment type="miscellaneous">
    <molecule>Isoform 2</molecule>
    <text evidence="11">By homology to mouse isoform 2.</text>
</comment>
<comment type="similarity">
    <text evidence="11">Belongs to the protein kinase superfamily. CAMK Ser/Thr protein kinase family. CaMK subfamily.</text>
</comment>
<comment type="sequence caution" evidence="11">
    <conflict type="erroneous initiation">
        <sequence resource="EMBL-CDS" id="BAD92418"/>
    </conflict>
    <text>Extended N-terminus.</text>
</comment>
<sequence length="766" mass="83606">MASTRSIELEHFEERDKRPRPGSRRGAPSSSGGSSSSGPKGNGLIPSPAHSAHCSFYRTRTLQALSSEKKAKKARFYRNGDRYFKGLVFAISSDRFRSFDALLIELTRSLSDNVNLPQGVRTIYTIDGSRKVTSLDELLEGESYVCASNEPFRKVDYTKNINPNWSVNIKGGTSRALAAASSVKSEVKESKDFIKPKLVTVIRSGVKPRKAVRILLNKKTAHSFEQVLTDITEAIKLDSGVVKRLCTLDGKQVTCLQDFFGDDDVFIACGPEKFRYAQDDFVLDHSECRVLKSSYSRSSAVKYSGSKSPGPSRRSKSPASVNGTPSSQLSTPKSTKSSSSSPTSPGSFRGLKQISAHGRSSSNVNGGPELDRCISPEGVNGNRCSESSTLLEKYKIGKVIGDGNFAVVKECIDRSTGKEFALKIIDKAKCCGKEHLIENEVSILRRVKHPNIIMLVEEMETATELFLVMELVKGGDLFDAITSSTKYTERDGSAMVYNLANALRYLHGLSIVHRDIKPENLLVCEYPDGTKSLKLGDFGLATVVEGPLYTVCGTPTYVAPEIIAETGYGLKVDIWAAGVITYILLCGFPPFRSENNLQEDLFDQILAGKLEFPAPYWDNITDSAKELISQMLQVNVEARCTAGQILSHPWVSDDASQENNMQAEVTGKLKQHFNNALPKQNSTTTGVSVIMNTALDKEGQIFCSKHCQDSGRPGMEPISPVPPSVEEIPVPGEAVPAPTPPESPTPHPPPAAPGGERAGTWRRHRD</sequence>
<protein>
    <recommendedName>
        <fullName>Serine/threonine-protein kinase DCLK2</fullName>
        <ecNumber>2.7.11.1</ecNumber>
    </recommendedName>
    <alternativeName>
        <fullName>CaMK-like CREB regulatory kinase 2</fullName>
        <shortName>CL2</shortName>
        <shortName>CLICK-II</shortName>
        <shortName>CLICK2</shortName>
    </alternativeName>
    <alternativeName>
        <fullName>Doublecortin domain-containing protein 3B</fullName>
    </alternativeName>
    <alternativeName>
        <fullName>Doublecortin-like and CAM kinase-like 2</fullName>
    </alternativeName>
    <alternativeName>
        <fullName>Doublecortin-like kinase 2</fullName>
    </alternativeName>
</protein>
<dbReference type="EC" id="2.7.11.1"/>
<dbReference type="EMBL" id="AB209181">
    <property type="protein sequence ID" value="BAD92418.1"/>
    <property type="status" value="ALT_INIT"/>
    <property type="molecule type" value="mRNA"/>
</dbReference>
<dbReference type="EMBL" id="AC093748">
    <property type="status" value="NOT_ANNOTATED_CDS"/>
    <property type="molecule type" value="Genomic_DNA"/>
</dbReference>
<dbReference type="EMBL" id="AC105343">
    <property type="status" value="NOT_ANNOTATED_CDS"/>
    <property type="molecule type" value="Genomic_DNA"/>
</dbReference>
<dbReference type="EMBL" id="AC108934">
    <property type="status" value="NOT_ANNOTATED_CDS"/>
    <property type="molecule type" value="Genomic_DNA"/>
</dbReference>
<dbReference type="EMBL" id="AC118064">
    <property type="status" value="NOT_ANNOTATED_CDS"/>
    <property type="molecule type" value="Genomic_DNA"/>
</dbReference>
<dbReference type="EMBL" id="AL834498">
    <property type="protein sequence ID" value="CAD39156.1"/>
    <property type="molecule type" value="mRNA"/>
</dbReference>
<dbReference type="CCDS" id="CCDS34076.1">
    <molecule id="Q8N568-1"/>
</dbReference>
<dbReference type="CCDS" id="CCDS47142.2">
    <molecule id="Q8N568-3"/>
</dbReference>
<dbReference type="CCDS" id="CCDS93647.1">
    <molecule id="Q8N568-2"/>
</dbReference>
<dbReference type="RefSeq" id="NP_001035350.2">
    <molecule id="Q8N568-1"/>
    <property type="nucleotide sequence ID" value="NM_001040260.4"/>
</dbReference>
<dbReference type="RefSeq" id="NP_001035351.4">
    <molecule id="Q8N568-3"/>
    <property type="nucleotide sequence ID" value="NM_001040261.5"/>
</dbReference>
<dbReference type="RefSeq" id="NP_001397781.1">
    <molecule id="Q8N568-2"/>
    <property type="nucleotide sequence ID" value="NM_001410852.1"/>
</dbReference>
<dbReference type="RefSeq" id="XP_005262843.1">
    <property type="nucleotide sequence ID" value="XM_005262786.2"/>
</dbReference>
<dbReference type="SMR" id="Q8N568"/>
<dbReference type="BioGRID" id="127929">
    <property type="interactions" value="30"/>
</dbReference>
<dbReference type="FunCoup" id="Q8N568">
    <property type="interactions" value="1038"/>
</dbReference>
<dbReference type="IntAct" id="Q8N568">
    <property type="interactions" value="29"/>
</dbReference>
<dbReference type="MINT" id="Q8N568"/>
<dbReference type="STRING" id="9606.ENSP00000303887"/>
<dbReference type="BindingDB" id="Q8N568"/>
<dbReference type="ChEMBL" id="CHEMBL5519"/>
<dbReference type="DrugBank" id="DB12010">
    <property type="generic name" value="Fostamatinib"/>
</dbReference>
<dbReference type="DrugCentral" id="Q8N568"/>
<dbReference type="GuidetoPHARMACOLOGY" id="2006"/>
<dbReference type="GlyGen" id="Q8N568">
    <property type="glycosylation" value="2 sites"/>
</dbReference>
<dbReference type="iPTMnet" id="Q8N568"/>
<dbReference type="PhosphoSitePlus" id="Q8N568"/>
<dbReference type="BioMuta" id="DCLK2"/>
<dbReference type="DMDM" id="296439470"/>
<dbReference type="jPOST" id="Q8N568"/>
<dbReference type="MassIVE" id="Q8N568"/>
<dbReference type="PaxDb" id="9606-ENSP00000303887"/>
<dbReference type="PeptideAtlas" id="Q8N568"/>
<dbReference type="ProteomicsDB" id="72008">
    <molecule id="Q8N568-1"/>
</dbReference>
<dbReference type="ProteomicsDB" id="72009">
    <molecule id="Q8N568-2"/>
</dbReference>
<dbReference type="ProteomicsDB" id="72010">
    <molecule id="Q8N568-3"/>
</dbReference>
<dbReference type="Pumba" id="Q8N568"/>
<dbReference type="Antibodypedia" id="16499">
    <property type="antibodies" value="177 antibodies from 34 providers"/>
</dbReference>
<dbReference type="DNASU" id="166614"/>
<dbReference type="Ensembl" id="ENST00000296550.12">
    <molecule id="Q8N568-1"/>
    <property type="protein sequence ID" value="ENSP00000296550.7"/>
    <property type="gene ID" value="ENSG00000170390.16"/>
</dbReference>
<dbReference type="Ensembl" id="ENST00000302176.8">
    <molecule id="Q8N568-3"/>
    <property type="protein sequence ID" value="ENSP00000303887.8"/>
    <property type="gene ID" value="ENSG00000170390.16"/>
</dbReference>
<dbReference type="Ensembl" id="ENST00000506325.5">
    <molecule id="Q8N568-2"/>
    <property type="protein sequence ID" value="ENSP00000427235.1"/>
    <property type="gene ID" value="ENSG00000170390.16"/>
</dbReference>
<dbReference type="GeneID" id="166614"/>
<dbReference type="KEGG" id="hsa:166614"/>
<dbReference type="MANE-Select" id="ENST00000296550.12">
    <property type="protein sequence ID" value="ENSP00000296550.7"/>
    <property type="RefSeq nucleotide sequence ID" value="NM_001040260.4"/>
    <property type="RefSeq protein sequence ID" value="NP_001035350.2"/>
</dbReference>
<dbReference type="UCSC" id="uc003ilm.5">
    <molecule id="Q8N568-1"/>
    <property type="organism name" value="human"/>
</dbReference>
<dbReference type="AGR" id="HGNC:19002"/>
<dbReference type="CTD" id="166614"/>
<dbReference type="DisGeNET" id="166614"/>
<dbReference type="GeneCards" id="DCLK2"/>
<dbReference type="HGNC" id="HGNC:19002">
    <property type="gene designation" value="DCLK2"/>
</dbReference>
<dbReference type="HPA" id="ENSG00000170390">
    <property type="expression patterns" value="Tissue enhanced (brain, retina)"/>
</dbReference>
<dbReference type="MIM" id="613166">
    <property type="type" value="gene"/>
</dbReference>
<dbReference type="neXtProt" id="NX_Q8N568"/>
<dbReference type="OpenTargets" id="ENSG00000170390"/>
<dbReference type="PharmGKB" id="PA162383366"/>
<dbReference type="VEuPathDB" id="HostDB:ENSG00000170390"/>
<dbReference type="eggNOG" id="KOG0032">
    <property type="taxonomic scope" value="Eukaryota"/>
</dbReference>
<dbReference type="GeneTree" id="ENSGT00940000154895"/>
<dbReference type="InParanoid" id="Q8N568"/>
<dbReference type="OMA" id="LMTECKV"/>
<dbReference type="OrthoDB" id="1738954at2759"/>
<dbReference type="PAN-GO" id="Q8N568">
    <property type="GO annotations" value="1 GO annotation based on evolutionary models"/>
</dbReference>
<dbReference type="PhylomeDB" id="Q8N568"/>
<dbReference type="TreeFam" id="TF318770"/>
<dbReference type="PathwayCommons" id="Q8N568"/>
<dbReference type="SignaLink" id="Q8N568"/>
<dbReference type="BioGRID-ORCS" id="166614">
    <property type="hits" value="14 hits in 1182 CRISPR screens"/>
</dbReference>
<dbReference type="CD-CODE" id="91857CE7">
    <property type="entry name" value="Nucleolus"/>
</dbReference>
<dbReference type="CD-CODE" id="FB4E32DD">
    <property type="entry name" value="Presynaptic clusters and postsynaptic densities"/>
</dbReference>
<dbReference type="ChiTaRS" id="DCLK2">
    <property type="organism name" value="human"/>
</dbReference>
<dbReference type="GenomeRNAi" id="166614"/>
<dbReference type="Pharos" id="Q8N568">
    <property type="development level" value="Tchem"/>
</dbReference>
<dbReference type="PRO" id="PR:Q8N568"/>
<dbReference type="Proteomes" id="UP000005640">
    <property type="component" value="Chromosome 4"/>
</dbReference>
<dbReference type="RNAct" id="Q8N568">
    <property type="molecule type" value="protein"/>
</dbReference>
<dbReference type="Bgee" id="ENSG00000170390">
    <property type="expression patterns" value="Expressed in oocyte and 121 other cell types or tissues"/>
</dbReference>
<dbReference type="ExpressionAtlas" id="Q8N568">
    <property type="expression patterns" value="baseline and differential"/>
</dbReference>
<dbReference type="GO" id="GO:0005737">
    <property type="term" value="C:cytoplasm"/>
    <property type="evidence" value="ECO:0000318"/>
    <property type="project" value="GO_Central"/>
</dbReference>
<dbReference type="GO" id="GO:0005856">
    <property type="term" value="C:cytoskeleton"/>
    <property type="evidence" value="ECO:0007669"/>
    <property type="project" value="UniProtKB-SubCell"/>
</dbReference>
<dbReference type="GO" id="GO:0005524">
    <property type="term" value="F:ATP binding"/>
    <property type="evidence" value="ECO:0007669"/>
    <property type="project" value="UniProtKB-KW"/>
</dbReference>
<dbReference type="GO" id="GO:0008017">
    <property type="term" value="F:microtubule binding"/>
    <property type="evidence" value="ECO:0007669"/>
    <property type="project" value="Ensembl"/>
</dbReference>
<dbReference type="GO" id="GO:0106310">
    <property type="term" value="F:protein serine kinase activity"/>
    <property type="evidence" value="ECO:0007669"/>
    <property type="project" value="RHEA"/>
</dbReference>
<dbReference type="GO" id="GO:0004674">
    <property type="term" value="F:protein serine/threonine kinase activity"/>
    <property type="evidence" value="ECO:0000318"/>
    <property type="project" value="GO_Central"/>
</dbReference>
<dbReference type="GO" id="GO:0021766">
    <property type="term" value="P:hippocampus development"/>
    <property type="evidence" value="ECO:0007669"/>
    <property type="project" value="Ensembl"/>
</dbReference>
<dbReference type="GO" id="GO:0035556">
    <property type="term" value="P:intracellular signal transduction"/>
    <property type="evidence" value="ECO:0007669"/>
    <property type="project" value="InterPro"/>
</dbReference>
<dbReference type="GO" id="GO:0000226">
    <property type="term" value="P:microtubule cytoskeleton organization"/>
    <property type="evidence" value="ECO:0000318"/>
    <property type="project" value="GO_Central"/>
</dbReference>
<dbReference type="GO" id="GO:1900181">
    <property type="term" value="P:negative regulation of protein localization to nucleus"/>
    <property type="evidence" value="ECO:0007669"/>
    <property type="project" value="Ensembl"/>
</dbReference>
<dbReference type="GO" id="GO:0034504">
    <property type="term" value="P:protein localization to nucleus"/>
    <property type="evidence" value="ECO:0000318"/>
    <property type="project" value="GO_Central"/>
</dbReference>
<dbReference type="GO" id="GO:0021860">
    <property type="term" value="P:pyramidal neuron development"/>
    <property type="evidence" value="ECO:0007669"/>
    <property type="project" value="Ensembl"/>
</dbReference>
<dbReference type="CDD" id="cd17141">
    <property type="entry name" value="DCX1_DCLK2"/>
    <property type="match status" value="1"/>
</dbReference>
<dbReference type="CDD" id="cd17069">
    <property type="entry name" value="DCX2"/>
    <property type="match status" value="1"/>
</dbReference>
<dbReference type="CDD" id="cd14184">
    <property type="entry name" value="STKc_DCKL2"/>
    <property type="match status" value="1"/>
</dbReference>
<dbReference type="FunFam" id="1.10.510.10:FF:000066">
    <property type="entry name" value="Serine/threonine-protein kinase DCLK1 isoform 2"/>
    <property type="match status" value="1"/>
</dbReference>
<dbReference type="FunFam" id="3.30.200.20:FF:000057">
    <property type="entry name" value="Serine/threonine-protein kinase DCLK1 isoform 2"/>
    <property type="match status" value="1"/>
</dbReference>
<dbReference type="FunFam" id="3.10.20.230:FF:000001">
    <property type="entry name" value="serine/threonine-protein kinase DCLK1 isoform X1"/>
    <property type="match status" value="1"/>
</dbReference>
<dbReference type="FunFam" id="3.10.20.230:FF:000002">
    <property type="entry name" value="serine/threonine-protein kinase DCLK2 isoform X1"/>
    <property type="match status" value="1"/>
</dbReference>
<dbReference type="Gene3D" id="3.10.20.230">
    <property type="entry name" value="Doublecortin domain"/>
    <property type="match status" value="2"/>
</dbReference>
<dbReference type="Gene3D" id="3.30.200.20">
    <property type="entry name" value="Phosphorylase Kinase, domain 1"/>
    <property type="match status" value="1"/>
</dbReference>
<dbReference type="Gene3D" id="1.10.510.10">
    <property type="entry name" value="Transferase(Phosphotransferase) domain 1"/>
    <property type="match status" value="1"/>
</dbReference>
<dbReference type="InterPro" id="IPR003533">
    <property type="entry name" value="Doublecortin_dom"/>
</dbReference>
<dbReference type="InterPro" id="IPR036572">
    <property type="entry name" value="Doublecortin_dom_sf"/>
</dbReference>
<dbReference type="InterPro" id="IPR011009">
    <property type="entry name" value="Kinase-like_dom_sf"/>
</dbReference>
<dbReference type="InterPro" id="IPR000719">
    <property type="entry name" value="Prot_kinase_dom"/>
</dbReference>
<dbReference type="InterPro" id="IPR017441">
    <property type="entry name" value="Protein_kinase_ATP_BS"/>
</dbReference>
<dbReference type="InterPro" id="IPR008271">
    <property type="entry name" value="Ser/Thr_kinase_AS"/>
</dbReference>
<dbReference type="PANTHER" id="PTHR24347">
    <property type="entry name" value="SERINE/THREONINE-PROTEIN KINASE"/>
    <property type="match status" value="1"/>
</dbReference>
<dbReference type="Pfam" id="PF03607">
    <property type="entry name" value="DCX"/>
    <property type="match status" value="2"/>
</dbReference>
<dbReference type="Pfam" id="PF00069">
    <property type="entry name" value="Pkinase"/>
    <property type="match status" value="1"/>
</dbReference>
<dbReference type="SMART" id="SM00537">
    <property type="entry name" value="DCX"/>
    <property type="match status" value="2"/>
</dbReference>
<dbReference type="SMART" id="SM00220">
    <property type="entry name" value="S_TKc"/>
    <property type="match status" value="1"/>
</dbReference>
<dbReference type="SUPFAM" id="SSF89837">
    <property type="entry name" value="Doublecortin (DC)"/>
    <property type="match status" value="2"/>
</dbReference>
<dbReference type="SUPFAM" id="SSF56112">
    <property type="entry name" value="Protein kinase-like (PK-like)"/>
    <property type="match status" value="1"/>
</dbReference>
<dbReference type="PROSITE" id="PS50309">
    <property type="entry name" value="DC"/>
    <property type="match status" value="2"/>
</dbReference>
<dbReference type="PROSITE" id="PS00107">
    <property type="entry name" value="PROTEIN_KINASE_ATP"/>
    <property type="match status" value="1"/>
</dbReference>
<dbReference type="PROSITE" id="PS50011">
    <property type="entry name" value="PROTEIN_KINASE_DOM"/>
    <property type="match status" value="1"/>
</dbReference>
<dbReference type="PROSITE" id="PS00108">
    <property type="entry name" value="PROTEIN_KINASE_ST"/>
    <property type="match status" value="1"/>
</dbReference>
<accession>Q8N568</accession>
<accession>C9J5Q9</accession>
<accession>Q59GC8</accession>
<accession>Q8N399</accession>
<gene>
    <name type="primary">DCLK2</name>
    <name type="synonym">DCAMKL2</name>
    <name type="synonym">DCDC3B</name>
    <name type="synonym">DCK2</name>
</gene>
<name>DCLK2_HUMAN</name>
<organism>
    <name type="scientific">Homo sapiens</name>
    <name type="common">Human</name>
    <dbReference type="NCBI Taxonomy" id="9606"/>
    <lineage>
        <taxon>Eukaryota</taxon>
        <taxon>Metazoa</taxon>
        <taxon>Chordata</taxon>
        <taxon>Craniata</taxon>
        <taxon>Vertebrata</taxon>
        <taxon>Euteleostomi</taxon>
        <taxon>Mammalia</taxon>
        <taxon>Eutheria</taxon>
        <taxon>Euarchontoglires</taxon>
        <taxon>Primates</taxon>
        <taxon>Haplorrhini</taxon>
        <taxon>Catarrhini</taxon>
        <taxon>Hominidae</taxon>
        <taxon>Homo</taxon>
    </lineage>
</organism>
<feature type="chain" id="PRO_0000085922" description="Serine/threonine-protein kinase DCLK2">
    <location>
        <begin position="1"/>
        <end position="766"/>
    </location>
</feature>
<feature type="domain" description="Doublecortin 1" evidence="3">
    <location>
        <begin position="72"/>
        <end position="158"/>
    </location>
</feature>
<feature type="domain" description="Doublecortin 2" evidence="3">
    <location>
        <begin position="197"/>
        <end position="280"/>
    </location>
</feature>
<feature type="domain" description="Protein kinase" evidence="4">
    <location>
        <begin position="394"/>
        <end position="651"/>
    </location>
</feature>
<feature type="region of interest" description="Disordered" evidence="6">
    <location>
        <begin position="1"/>
        <end position="45"/>
    </location>
</feature>
<feature type="region of interest" description="Disordered" evidence="6">
    <location>
        <begin position="300"/>
        <end position="378"/>
    </location>
</feature>
<feature type="region of interest" description="Disordered" evidence="6">
    <location>
        <begin position="707"/>
        <end position="766"/>
    </location>
</feature>
<feature type="compositionally biased region" description="Basic and acidic residues" evidence="6">
    <location>
        <begin position="7"/>
        <end position="19"/>
    </location>
</feature>
<feature type="compositionally biased region" description="Low complexity" evidence="6">
    <location>
        <begin position="24"/>
        <end position="39"/>
    </location>
</feature>
<feature type="compositionally biased region" description="Low complexity" evidence="6">
    <location>
        <begin position="300"/>
        <end position="312"/>
    </location>
</feature>
<feature type="compositionally biased region" description="Low complexity" evidence="6">
    <location>
        <begin position="324"/>
        <end position="347"/>
    </location>
</feature>
<feature type="compositionally biased region" description="Low complexity" evidence="6">
    <location>
        <begin position="724"/>
        <end position="736"/>
    </location>
</feature>
<feature type="compositionally biased region" description="Pro residues" evidence="6">
    <location>
        <begin position="737"/>
        <end position="752"/>
    </location>
</feature>
<feature type="active site" description="Proton acceptor" evidence="4 5">
    <location>
        <position position="515"/>
    </location>
</feature>
<feature type="binding site" evidence="4">
    <location>
        <begin position="400"/>
        <end position="408"/>
    </location>
    <ligand>
        <name>ATP</name>
        <dbReference type="ChEBI" id="CHEBI:30616"/>
    </ligand>
</feature>
<feature type="binding site" evidence="4">
    <location>
        <position position="423"/>
    </location>
    <ligand>
        <name>ATP</name>
        <dbReference type="ChEBI" id="CHEBI:30616"/>
    </ligand>
</feature>
<feature type="modified residue" description="Phosphothreonine" evidence="12">
    <location>
        <position position="61"/>
    </location>
</feature>
<feature type="modified residue" description="Phosphoserine" evidence="12">
    <location>
        <position position="362"/>
    </location>
</feature>
<feature type="modified residue" description="Phosphoserine" evidence="2">
    <location>
        <position position="647"/>
    </location>
</feature>
<feature type="modified residue" description="Phosphothreonine" evidence="2">
    <location>
        <position position="666"/>
    </location>
</feature>
<feature type="splice variant" id="VSP_012793" description="In isoform 3." evidence="10">
    <original>V</original>
    <variation>VKRGGHYSSAYSTAKSPV</variation>
    <location>
        <position position="321"/>
    </location>
</feature>
<feature type="splice variant" id="VSP_012794" description="In isoform 2." evidence="11">
    <location>
        <position position="353"/>
    </location>
</feature>
<feature type="sequence variant" id="VAR_040441" description="In dbSNP:rs56327537." evidence="7">
    <original>G</original>
    <variation>C</variation>
    <location>
        <position position="119"/>
    </location>
</feature>
<feature type="sequence variant" id="VAR_073158" description="Found in a patient with hereditary motor and sensory neuropathy; uncertain significance; dbSNP:rs759398144." evidence="9">
    <original>V</original>
    <variation>M</variation>
    <location>
        <position position="212"/>
    </location>
</feature>
<feature type="sequence variant" id="VAR_040442" description="In dbSNP:rs34386880." evidence="7">
    <original>R</original>
    <variation>H</variation>
    <location>
        <position position="372"/>
    </location>
</feature>
<feature type="sequence variant" id="VAR_040443" description="In dbSNP:rs35745104." evidence="7">
    <original>I</original>
    <variation>V</variation>
    <location>
        <position position="583"/>
    </location>
</feature>
<feature type="sequence conflict" description="In Ref. 3; CAD39156." evidence="11" ref="3">
    <original>A</original>
    <variation>V</variation>
    <location>
        <position position="694"/>
    </location>
</feature>
<feature type="sequence conflict" description="In Ref. 1; BAD92418 and 3; CAD39156." evidence="11" ref="1 3">
    <original>P</original>
    <variation>C</variation>
    <location>
        <position position="748"/>
    </location>
</feature>
<proteinExistence type="evidence at protein level"/>
<evidence type="ECO:0000250" key="1"/>
<evidence type="ECO:0000250" key="2">
    <source>
        <dbReference type="UniProtKB" id="Q5MPA9"/>
    </source>
</evidence>
<evidence type="ECO:0000255" key="3">
    <source>
        <dbReference type="PROSITE-ProRule" id="PRU00072"/>
    </source>
</evidence>
<evidence type="ECO:0000255" key="4">
    <source>
        <dbReference type="PROSITE-ProRule" id="PRU00159"/>
    </source>
</evidence>
<evidence type="ECO:0000255" key="5">
    <source>
        <dbReference type="PROSITE-ProRule" id="PRU10027"/>
    </source>
</evidence>
<evidence type="ECO:0000256" key="6">
    <source>
        <dbReference type="SAM" id="MobiDB-lite"/>
    </source>
</evidence>
<evidence type="ECO:0000269" key="7">
    <source>
    </source>
</evidence>
<evidence type="ECO:0000269" key="8">
    <source>
    </source>
</evidence>
<evidence type="ECO:0000269" key="9">
    <source>
    </source>
</evidence>
<evidence type="ECO:0000303" key="10">
    <source>
    </source>
</evidence>
<evidence type="ECO:0000305" key="11"/>
<evidence type="ECO:0007744" key="12">
    <source>
    </source>
</evidence>
<reference key="1">
    <citation type="submission" date="2005-03" db="EMBL/GenBank/DDBJ databases">
        <authorList>
            <person name="Totoki Y."/>
            <person name="Toyoda A."/>
            <person name="Takeda T."/>
            <person name="Sakaki Y."/>
            <person name="Tanaka A."/>
            <person name="Yokoyama S."/>
            <person name="Ohara O."/>
            <person name="Nagase T."/>
            <person name="Kikuno R.F."/>
        </authorList>
    </citation>
    <scope>NUCLEOTIDE SEQUENCE [LARGE SCALE MRNA] (ISOFORM 1)</scope>
    <source>
        <tissue>Brain</tissue>
    </source>
</reference>
<reference key="2">
    <citation type="journal article" date="2005" name="Nature">
        <title>Generation and annotation of the DNA sequences of human chromosomes 2 and 4.</title>
        <authorList>
            <person name="Hillier L.W."/>
            <person name="Graves T.A."/>
            <person name="Fulton R.S."/>
            <person name="Fulton L.A."/>
            <person name="Pepin K.H."/>
            <person name="Minx P."/>
            <person name="Wagner-McPherson C."/>
            <person name="Layman D."/>
            <person name="Wylie K."/>
            <person name="Sekhon M."/>
            <person name="Becker M.C."/>
            <person name="Fewell G.A."/>
            <person name="Delehaunty K.D."/>
            <person name="Miner T.L."/>
            <person name="Nash W.E."/>
            <person name="Kremitzki C."/>
            <person name="Oddy L."/>
            <person name="Du H."/>
            <person name="Sun H."/>
            <person name="Bradshaw-Cordum H."/>
            <person name="Ali J."/>
            <person name="Carter J."/>
            <person name="Cordes M."/>
            <person name="Harris A."/>
            <person name="Isak A."/>
            <person name="van Brunt A."/>
            <person name="Nguyen C."/>
            <person name="Du F."/>
            <person name="Courtney L."/>
            <person name="Kalicki J."/>
            <person name="Ozersky P."/>
            <person name="Abbott S."/>
            <person name="Armstrong J."/>
            <person name="Belter E.A."/>
            <person name="Caruso L."/>
            <person name="Cedroni M."/>
            <person name="Cotton M."/>
            <person name="Davidson T."/>
            <person name="Desai A."/>
            <person name="Elliott G."/>
            <person name="Erb T."/>
            <person name="Fronick C."/>
            <person name="Gaige T."/>
            <person name="Haakenson W."/>
            <person name="Haglund K."/>
            <person name="Holmes A."/>
            <person name="Harkins R."/>
            <person name="Kim K."/>
            <person name="Kruchowski S.S."/>
            <person name="Strong C.M."/>
            <person name="Grewal N."/>
            <person name="Goyea E."/>
            <person name="Hou S."/>
            <person name="Levy A."/>
            <person name="Martinka S."/>
            <person name="Mead K."/>
            <person name="McLellan M.D."/>
            <person name="Meyer R."/>
            <person name="Randall-Maher J."/>
            <person name="Tomlinson C."/>
            <person name="Dauphin-Kohlberg S."/>
            <person name="Kozlowicz-Reilly A."/>
            <person name="Shah N."/>
            <person name="Swearengen-Shahid S."/>
            <person name="Snider J."/>
            <person name="Strong J.T."/>
            <person name="Thompson J."/>
            <person name="Yoakum M."/>
            <person name="Leonard S."/>
            <person name="Pearman C."/>
            <person name="Trani L."/>
            <person name="Radionenko M."/>
            <person name="Waligorski J.E."/>
            <person name="Wang C."/>
            <person name="Rock S.M."/>
            <person name="Tin-Wollam A.-M."/>
            <person name="Maupin R."/>
            <person name="Latreille P."/>
            <person name="Wendl M.C."/>
            <person name="Yang S.-P."/>
            <person name="Pohl C."/>
            <person name="Wallis J.W."/>
            <person name="Spieth J."/>
            <person name="Bieri T.A."/>
            <person name="Berkowicz N."/>
            <person name="Nelson J.O."/>
            <person name="Osborne J."/>
            <person name="Ding L."/>
            <person name="Meyer R."/>
            <person name="Sabo A."/>
            <person name="Shotland Y."/>
            <person name="Sinha P."/>
            <person name="Wohldmann P.E."/>
            <person name="Cook L.L."/>
            <person name="Hickenbotham M.T."/>
            <person name="Eldred J."/>
            <person name="Williams D."/>
            <person name="Jones T.A."/>
            <person name="She X."/>
            <person name="Ciccarelli F.D."/>
            <person name="Izaurralde E."/>
            <person name="Taylor J."/>
            <person name="Schmutz J."/>
            <person name="Myers R.M."/>
            <person name="Cox D.R."/>
            <person name="Huang X."/>
            <person name="McPherson J.D."/>
            <person name="Mardis E.R."/>
            <person name="Clifton S.W."/>
            <person name="Warren W.C."/>
            <person name="Chinwalla A.T."/>
            <person name="Eddy S.R."/>
            <person name="Marra M.A."/>
            <person name="Ovcharenko I."/>
            <person name="Furey T.S."/>
            <person name="Miller W."/>
            <person name="Eichler E.E."/>
            <person name="Bork P."/>
            <person name="Suyama M."/>
            <person name="Torrents D."/>
            <person name="Waterston R.H."/>
            <person name="Wilson R.K."/>
        </authorList>
    </citation>
    <scope>NUCLEOTIDE SEQUENCE [LARGE SCALE GENOMIC DNA]</scope>
</reference>
<reference key="3">
    <citation type="journal article" date="2007" name="BMC Genomics">
        <title>The full-ORF clone resource of the German cDNA consortium.</title>
        <authorList>
            <person name="Bechtel S."/>
            <person name="Rosenfelder H."/>
            <person name="Duda A."/>
            <person name="Schmidt C.P."/>
            <person name="Ernst U."/>
            <person name="Wellenreuther R."/>
            <person name="Mehrle A."/>
            <person name="Schuster C."/>
            <person name="Bahr A."/>
            <person name="Bloecker H."/>
            <person name="Heubner D."/>
            <person name="Hoerlein A."/>
            <person name="Michel G."/>
            <person name="Wedler H."/>
            <person name="Koehrer K."/>
            <person name="Ottenwaelder B."/>
            <person name="Poustka A."/>
            <person name="Wiemann S."/>
            <person name="Schupp I."/>
        </authorList>
    </citation>
    <scope>NUCLEOTIDE SEQUENCE [LARGE SCALE MRNA] OF 68-766 (ISOFORM 3)</scope>
    <source>
        <tissue>Amygdala</tissue>
    </source>
</reference>
<reference key="4">
    <citation type="journal article" date="2006" name="BMC Genomics">
        <title>The evolving doublecortin (DCX) superfamily.</title>
        <authorList>
            <person name="Reiner O."/>
            <person name="Coquelle F.M."/>
            <person name="Peter B."/>
            <person name="Levy T."/>
            <person name="Kaplan A."/>
            <person name="Sapir T."/>
            <person name="Orr I."/>
            <person name="Barkai N."/>
            <person name="Eichele G."/>
            <person name="Bergmann S."/>
        </authorList>
    </citation>
    <scope>GENE FAMILY</scope>
</reference>
<reference key="5">
    <citation type="journal article" date="2008" name="Dev. Neurosci.">
        <title>Alternative transcripts of Dclk1 and Dclk2 and their expression in doublecortin knockout mice.</title>
        <authorList>
            <person name="Tuy F.P.D."/>
            <person name="Saillour Y."/>
            <person name="Kappeler C."/>
            <person name="Chelly J."/>
            <person name="Francis F."/>
        </authorList>
    </citation>
    <scope>TISSUE SPECIFICITY</scope>
    <scope>DEVELOPMENTAL STAGE</scope>
</reference>
<reference key="6">
    <citation type="journal article" date="2010" name="Cent. Nerv. Syst. Agents Med. Chem.">
        <title>The doublecortin gene family and disorders of neuronal structure.</title>
        <authorList>
            <person name="Dijkmans T.F."/>
            <person name="van Hooijdonk L.W.A."/>
            <person name="Fitzsimons C.P."/>
            <person name="Vreugdenhil E."/>
        </authorList>
    </citation>
    <scope>REVIEW</scope>
    <scope>GENE FAMILY</scope>
</reference>
<reference key="7">
    <citation type="journal article" date="2013" name="J. Proteome Res.">
        <title>Toward a comprehensive characterization of a human cancer cell phosphoproteome.</title>
        <authorList>
            <person name="Zhou H."/>
            <person name="Di Palma S."/>
            <person name="Preisinger C."/>
            <person name="Peng M."/>
            <person name="Polat A.N."/>
            <person name="Heck A.J."/>
            <person name="Mohammed S."/>
        </authorList>
    </citation>
    <scope>PHOSPHORYLATION [LARGE SCALE ANALYSIS] AT THR-61 AND SER-362</scope>
    <scope>IDENTIFICATION BY MASS SPECTROMETRY [LARGE SCALE ANALYSIS]</scope>
    <source>
        <tissue>Cervix carcinoma</tissue>
    </source>
</reference>
<reference key="8">
    <citation type="journal article" date="2007" name="Nature">
        <title>Patterns of somatic mutation in human cancer genomes.</title>
        <authorList>
            <person name="Greenman C."/>
            <person name="Stephens P."/>
            <person name="Smith R."/>
            <person name="Dalgliesh G.L."/>
            <person name="Hunter C."/>
            <person name="Bignell G."/>
            <person name="Davies H."/>
            <person name="Teague J."/>
            <person name="Butler A."/>
            <person name="Stevens C."/>
            <person name="Edkins S."/>
            <person name="O'Meara S."/>
            <person name="Vastrik I."/>
            <person name="Schmidt E.E."/>
            <person name="Avis T."/>
            <person name="Barthorpe S."/>
            <person name="Bhamra G."/>
            <person name="Buck G."/>
            <person name="Choudhury B."/>
            <person name="Clements J."/>
            <person name="Cole J."/>
            <person name="Dicks E."/>
            <person name="Forbes S."/>
            <person name="Gray K."/>
            <person name="Halliday K."/>
            <person name="Harrison R."/>
            <person name="Hills K."/>
            <person name="Hinton J."/>
            <person name="Jenkinson A."/>
            <person name="Jones D."/>
            <person name="Menzies A."/>
            <person name="Mironenko T."/>
            <person name="Perry J."/>
            <person name="Raine K."/>
            <person name="Richardson D."/>
            <person name="Shepherd R."/>
            <person name="Small A."/>
            <person name="Tofts C."/>
            <person name="Varian J."/>
            <person name="Webb T."/>
            <person name="West S."/>
            <person name="Widaa S."/>
            <person name="Yates A."/>
            <person name="Cahill D.P."/>
            <person name="Louis D.N."/>
            <person name="Goldstraw P."/>
            <person name="Nicholson A.G."/>
            <person name="Brasseur F."/>
            <person name="Looijenga L."/>
            <person name="Weber B.L."/>
            <person name="Chiew Y.-E."/>
            <person name="DeFazio A."/>
            <person name="Greaves M.F."/>
            <person name="Green A.R."/>
            <person name="Campbell P."/>
            <person name="Birney E."/>
            <person name="Easton D.F."/>
            <person name="Chenevix-Trench G."/>
            <person name="Tan M.-H."/>
            <person name="Khoo S.K."/>
            <person name="Teh B.T."/>
            <person name="Yuen S.T."/>
            <person name="Leung S.Y."/>
            <person name="Wooster R."/>
            <person name="Futreal P.A."/>
            <person name="Stratton M.R."/>
        </authorList>
    </citation>
    <scope>VARIANTS [LARGE SCALE ANALYSIS] CYS-119; HIS-372 AND VAL-583</scope>
</reference>
<reference key="9">
    <citation type="journal article" date="2015" name="Hum. Mutat.">
        <title>Novel mutations in the DYNC1H1 tail domain refine the genetic and clinical spectrum of dyneinopathies.</title>
        <authorList>
            <person name="Peeters K."/>
            <person name="Bervoets S."/>
            <person name="Chamova T."/>
            <person name="Litvinenko I."/>
            <person name="De Vriendt E."/>
            <person name="Bichev S."/>
            <person name="Kancheva D."/>
            <person name="Mitev V."/>
            <person name="Kennerson M."/>
            <person name="Timmerman V."/>
            <person name="De Jonghe P."/>
            <person name="Tournev I."/>
            <person name="MacMillan J."/>
            <person name="Jordanova A."/>
        </authorList>
    </citation>
    <scope>VARIANT MET-212</scope>
</reference>
<keyword id="KW-0025">Alternative splicing</keyword>
<keyword id="KW-0067">ATP-binding</keyword>
<keyword id="KW-0963">Cytoplasm</keyword>
<keyword id="KW-0206">Cytoskeleton</keyword>
<keyword id="KW-0418">Kinase</keyword>
<keyword id="KW-0547">Nucleotide-binding</keyword>
<keyword id="KW-0597">Phosphoprotein</keyword>
<keyword id="KW-1267">Proteomics identification</keyword>
<keyword id="KW-1185">Reference proteome</keyword>
<keyword id="KW-0677">Repeat</keyword>
<keyword id="KW-0723">Serine/threonine-protein kinase</keyword>
<keyword id="KW-0808">Transferase</keyword>